<sequence length="290" mass="33888">MLDKVKREVFFVARLLVVLYLSTLLLISYENVNYIAVGILSVYFLINVYVYFFSKPRILQLISPFLDIILVPAFVFFSKILYSIYALGVLISVYAWRKPVLAGIILLETYGLAFFYFSGHYLLMISHFILFLALFFTSYNFEYATVVGKERKRILKLKKNYHKLLKEFSNFEREKRMFSNLRKILKLLRESKEPKDYFEGLKREFNVKRISVIPVNEVEGEEVFDYDKGTLSVFVKLDRGYAKVVYELDPPFRLRDPVLIQALVEGAKLLSLYVEGFEESAEGKQVLVVG</sequence>
<reference key="1">
    <citation type="journal article" date="1998" name="Nature">
        <title>The complete genome of the hyperthermophilic bacterium Aquifex aeolicus.</title>
        <authorList>
            <person name="Deckert G."/>
            <person name="Warren P.V."/>
            <person name="Gaasterland T."/>
            <person name="Young W.G."/>
            <person name="Lenox A.L."/>
            <person name="Graham D.E."/>
            <person name="Overbeek R."/>
            <person name="Snead M.A."/>
            <person name="Keller M."/>
            <person name="Aujay M."/>
            <person name="Huber R."/>
            <person name="Feldman R.A."/>
            <person name="Short J.M."/>
            <person name="Olsen G.J."/>
            <person name="Swanson R.V."/>
        </authorList>
    </citation>
    <scope>NUCLEOTIDE SEQUENCE [LARGE SCALE GENOMIC DNA]</scope>
    <source>
        <strain>VF5</strain>
    </source>
</reference>
<organism>
    <name type="scientific">Aquifex aeolicus (strain VF5)</name>
    <dbReference type="NCBI Taxonomy" id="224324"/>
    <lineage>
        <taxon>Bacteria</taxon>
        <taxon>Pseudomonadati</taxon>
        <taxon>Aquificota</taxon>
        <taxon>Aquificia</taxon>
        <taxon>Aquificales</taxon>
        <taxon>Aquificaceae</taxon>
        <taxon>Aquifex</taxon>
    </lineage>
</organism>
<gene>
    <name type="ordered locus">aq_1842</name>
</gene>
<comment type="subcellular location">
    <subcellularLocation>
        <location evidence="2">Cell membrane</location>
        <topology evidence="2">Multi-pass membrane protein</topology>
    </subcellularLocation>
</comment>
<dbReference type="EMBL" id="AE000657">
    <property type="protein sequence ID" value="AAC07660.1"/>
    <property type="molecule type" value="Genomic_DNA"/>
</dbReference>
<dbReference type="PIR" id="F70458">
    <property type="entry name" value="F70458"/>
</dbReference>
<dbReference type="RefSeq" id="NP_214264.1">
    <property type="nucleotide sequence ID" value="NC_000918.1"/>
</dbReference>
<dbReference type="RefSeq" id="WP_010881200.1">
    <property type="nucleotide sequence ID" value="NC_000918.1"/>
</dbReference>
<dbReference type="SMR" id="O67696"/>
<dbReference type="STRING" id="224324.aq_1842"/>
<dbReference type="EnsemblBacteria" id="AAC07660">
    <property type="protein sequence ID" value="AAC07660"/>
    <property type="gene ID" value="aq_1842"/>
</dbReference>
<dbReference type="KEGG" id="aae:aq_1842"/>
<dbReference type="PATRIC" id="fig|224324.8.peg.1421"/>
<dbReference type="HOGENOM" id="CLU_958590_0_0_0"/>
<dbReference type="InParanoid" id="O67696"/>
<dbReference type="OrthoDB" id="12260at2"/>
<dbReference type="Proteomes" id="UP000000798">
    <property type="component" value="Chromosome"/>
</dbReference>
<dbReference type="GO" id="GO:0005886">
    <property type="term" value="C:plasma membrane"/>
    <property type="evidence" value="ECO:0007669"/>
    <property type="project" value="UniProtKB-SubCell"/>
</dbReference>
<accession>O67696</accession>
<protein>
    <recommendedName>
        <fullName>Uncharacterized protein aq_1842</fullName>
    </recommendedName>
</protein>
<evidence type="ECO:0000255" key="1"/>
<evidence type="ECO:0000305" key="2"/>
<keyword id="KW-1003">Cell membrane</keyword>
<keyword id="KW-0175">Coiled coil</keyword>
<keyword id="KW-0472">Membrane</keyword>
<keyword id="KW-1185">Reference proteome</keyword>
<keyword id="KW-0812">Transmembrane</keyword>
<keyword id="KW-1133">Transmembrane helix</keyword>
<feature type="chain" id="PRO_0000186950" description="Uncharacterized protein aq_1842">
    <location>
        <begin position="1"/>
        <end position="290"/>
    </location>
</feature>
<feature type="transmembrane region" description="Helical" evidence="1">
    <location>
        <begin position="10"/>
        <end position="27"/>
    </location>
</feature>
<feature type="transmembrane region" description="Helical" evidence="1">
    <location>
        <begin position="32"/>
        <end position="54"/>
    </location>
</feature>
<feature type="transmembrane region" description="Helical" evidence="1">
    <location>
        <begin position="69"/>
        <end position="91"/>
    </location>
</feature>
<feature type="transmembrane region" description="Helical" evidence="1">
    <location>
        <begin position="100"/>
        <end position="117"/>
    </location>
</feature>
<feature type="transmembrane region" description="Helical" evidence="1">
    <location>
        <begin position="121"/>
        <end position="143"/>
    </location>
</feature>
<feature type="coiled-coil region" evidence="1">
    <location>
        <begin position="147"/>
        <end position="183"/>
    </location>
</feature>
<proteinExistence type="predicted"/>
<name>Y1842_AQUAE</name>